<accession>Q5ZK47</accession>
<comment type="function">
    <text evidence="1">Pseudokinase which, in complex with CAB39/MO25 (CAB39/MO25alpha or CAB39L/MO25beta), binds to and activates STK11/LKB1. Adopts a closed conformation typical of active protein kinases and binds STK11/LKB1 as a pseudosubstrate, promoting conformational change of STK11/LKB1 in an active conformation (By similarity).</text>
</comment>
<comment type="subunit">
    <text evidence="1">Component of a trimeric complex composed of STK11/LKB1, STRAD (STRADA or STRADB) and CAB39/MO25 (CAB39/MO25alpha or CAB39L/MO25beta): the complex tethers STK11/LKB1 in the cytoplasm and stimulates its catalytic activity.</text>
</comment>
<comment type="subcellular location">
    <subcellularLocation>
        <location evidence="1">Nucleus</location>
    </subcellularLocation>
    <subcellularLocation>
        <location evidence="2">Cytoplasm</location>
    </subcellularLocation>
</comment>
<comment type="tissue specificity">
    <text evidence="5">Expressed in brain, hypothalamus, heart and skeletal muscle.</text>
</comment>
<comment type="domain">
    <text evidence="3">The protein kinase domain is predicted to be catalytically inactive.</text>
</comment>
<comment type="similarity">
    <text evidence="6">Belongs to the protein kinase superfamily. STE Ser/Thr protein kinase family. STE20 subfamily.</text>
</comment>
<feature type="chain" id="PRO_0000260040" description="STE20-related kinase adapter protein alpha">
    <location>
        <begin position="1"/>
        <end position="389"/>
    </location>
</feature>
<feature type="domain" description="Protein kinase" evidence="4">
    <location>
        <begin position="11"/>
        <end position="321"/>
    </location>
</feature>
<gene>
    <name type="primary">STRADA</name>
    <name type="synonym">STRAD</name>
    <name type="ORF">RCJMB04_13d22</name>
</gene>
<dbReference type="EMBL" id="AJ720237">
    <property type="protein sequence ID" value="CAG31896.1"/>
    <property type="molecule type" value="mRNA"/>
</dbReference>
<dbReference type="SMR" id="Q5ZK47"/>
<dbReference type="FunCoup" id="Q5ZK47">
    <property type="interactions" value="780"/>
</dbReference>
<dbReference type="STRING" id="9031.ENSGALP00000000765"/>
<dbReference type="PaxDb" id="9031-ENSGALP00000000765"/>
<dbReference type="VEuPathDB" id="HostDB:geneid_419957"/>
<dbReference type="eggNOG" id="KOG0582">
    <property type="taxonomic scope" value="Eukaryota"/>
</dbReference>
<dbReference type="InParanoid" id="Q5ZK47"/>
<dbReference type="OrthoDB" id="840771at2759"/>
<dbReference type="PhylomeDB" id="Q5ZK47"/>
<dbReference type="PRO" id="PR:Q5ZK47"/>
<dbReference type="Proteomes" id="UP000000539">
    <property type="component" value="Unassembled WGS sequence"/>
</dbReference>
<dbReference type="GO" id="GO:0005737">
    <property type="term" value="C:cytoplasm"/>
    <property type="evidence" value="ECO:0000250"/>
    <property type="project" value="UniProtKB"/>
</dbReference>
<dbReference type="GO" id="GO:0005634">
    <property type="term" value="C:nucleus"/>
    <property type="evidence" value="ECO:0000250"/>
    <property type="project" value="UniProtKB"/>
</dbReference>
<dbReference type="GO" id="GO:1902554">
    <property type="term" value="C:serine/threonine protein kinase complex"/>
    <property type="evidence" value="ECO:0000318"/>
    <property type="project" value="GO_Central"/>
</dbReference>
<dbReference type="GO" id="GO:0005524">
    <property type="term" value="F:ATP binding"/>
    <property type="evidence" value="ECO:0007669"/>
    <property type="project" value="InterPro"/>
</dbReference>
<dbReference type="GO" id="GO:0030295">
    <property type="term" value="F:protein kinase activator activity"/>
    <property type="evidence" value="ECO:0000250"/>
    <property type="project" value="UniProtKB"/>
</dbReference>
<dbReference type="GO" id="GO:0004672">
    <property type="term" value="F:protein kinase activity"/>
    <property type="evidence" value="ECO:0007669"/>
    <property type="project" value="InterPro"/>
</dbReference>
<dbReference type="GO" id="GO:0043539">
    <property type="term" value="F:protein serine/threonine kinase activator activity"/>
    <property type="evidence" value="ECO:0000318"/>
    <property type="project" value="GO_Central"/>
</dbReference>
<dbReference type="GO" id="GO:0032147">
    <property type="term" value="P:activation of protein kinase activity"/>
    <property type="evidence" value="ECO:0000250"/>
    <property type="project" value="UniProtKB"/>
</dbReference>
<dbReference type="GO" id="GO:0006611">
    <property type="term" value="P:protein export from nucleus"/>
    <property type="evidence" value="ECO:0000250"/>
    <property type="project" value="UniProtKB"/>
</dbReference>
<dbReference type="CDD" id="cd08227">
    <property type="entry name" value="PK_STRAD_alpha"/>
    <property type="match status" value="1"/>
</dbReference>
<dbReference type="FunFam" id="3.30.200.20:FF:000130">
    <property type="entry name" value="STE20-related kinase adapter protein alpha"/>
    <property type="match status" value="1"/>
</dbReference>
<dbReference type="FunFam" id="1.10.510.10:FF:000213">
    <property type="entry name" value="STE20-related kinase adapter protein alpha isoform X2"/>
    <property type="match status" value="1"/>
</dbReference>
<dbReference type="Gene3D" id="3.30.200.20">
    <property type="entry name" value="Phosphorylase Kinase, domain 1"/>
    <property type="match status" value="1"/>
</dbReference>
<dbReference type="Gene3D" id="1.10.510.10">
    <property type="entry name" value="Transferase(Phosphotransferase) domain 1"/>
    <property type="match status" value="1"/>
</dbReference>
<dbReference type="InterPro" id="IPR011009">
    <property type="entry name" value="Kinase-like_dom_sf"/>
</dbReference>
<dbReference type="InterPro" id="IPR000719">
    <property type="entry name" value="Prot_kinase_dom"/>
</dbReference>
<dbReference type="InterPro" id="IPR047173">
    <property type="entry name" value="STRAD_A/B-like"/>
</dbReference>
<dbReference type="PANTHER" id="PTHR48014">
    <property type="entry name" value="SERINE/THREONINE-PROTEIN KINASE FRAY2"/>
    <property type="match status" value="1"/>
</dbReference>
<dbReference type="PANTHER" id="PTHR48014:SF20">
    <property type="entry name" value="STE20-RELATED KINASE ADAPTER PROTEIN ALPHA"/>
    <property type="match status" value="1"/>
</dbReference>
<dbReference type="Pfam" id="PF00069">
    <property type="entry name" value="Pkinase"/>
    <property type="match status" value="1"/>
</dbReference>
<dbReference type="SUPFAM" id="SSF56112">
    <property type="entry name" value="Protein kinase-like (PK-like)"/>
    <property type="match status" value="1"/>
</dbReference>
<dbReference type="PROSITE" id="PS50011">
    <property type="entry name" value="PROTEIN_KINASE_DOM"/>
    <property type="match status" value="1"/>
</dbReference>
<organism>
    <name type="scientific">Gallus gallus</name>
    <name type="common">Chicken</name>
    <dbReference type="NCBI Taxonomy" id="9031"/>
    <lineage>
        <taxon>Eukaryota</taxon>
        <taxon>Metazoa</taxon>
        <taxon>Chordata</taxon>
        <taxon>Craniata</taxon>
        <taxon>Vertebrata</taxon>
        <taxon>Euteleostomi</taxon>
        <taxon>Archelosauria</taxon>
        <taxon>Archosauria</taxon>
        <taxon>Dinosauria</taxon>
        <taxon>Saurischia</taxon>
        <taxon>Theropoda</taxon>
        <taxon>Coelurosauria</taxon>
        <taxon>Aves</taxon>
        <taxon>Neognathae</taxon>
        <taxon>Galloanserae</taxon>
        <taxon>Galliformes</taxon>
        <taxon>Phasianidae</taxon>
        <taxon>Phasianinae</taxon>
        <taxon>Gallus</taxon>
    </lineage>
</organism>
<sequence length="389" mass="43397">MSNFLPDSSCYELLTIIGRGFEDLMVVNLARYKPSGEYVTVRRVNLEACTNEMVTFLQGELHVSKLFNHPNIVPYKATFIADNELWVVTSFMAYGSAKDLICTHFMDGMSELAIAYILQGVLKALDYIHHMGYVHRSVKASHILISVDGKVYLSGLRSNLSMINHGQRLKVVHDFPKYSIKVLPWLSPEVLQQNLQGYDAKSDIYSIGITACELANGHVPFKDMPSTQMLLEKLNGTVPCLLDTTTIPADELTMKTSRSSANYGLGESTAVSNVRAANGESTLHPYLRTFSSCFHNFVGQCLQRNPDFRPSAGALLNHPFFKQIKRRASEALPELLRPVTPITNFEGTRPQDPSGILGWCQTWSSWMWMTGNSRKTKTALGSGGAFWTL</sequence>
<name>STRAA_CHICK</name>
<evidence type="ECO:0000250" key="1"/>
<evidence type="ECO:0000250" key="2">
    <source>
        <dbReference type="UniProtKB" id="Q7RTN6"/>
    </source>
</evidence>
<evidence type="ECO:0000255" key="3"/>
<evidence type="ECO:0000255" key="4">
    <source>
        <dbReference type="PROSITE-ProRule" id="PRU00159"/>
    </source>
</evidence>
<evidence type="ECO:0000269" key="5">
    <source>
    </source>
</evidence>
<evidence type="ECO:0000305" key="6"/>
<evidence type="ECO:0000312" key="7">
    <source>
        <dbReference type="EMBL" id="CAG31896.1"/>
    </source>
</evidence>
<keyword id="KW-0131">Cell cycle</keyword>
<keyword id="KW-0963">Cytoplasm</keyword>
<keyword id="KW-0539">Nucleus</keyword>
<keyword id="KW-0597">Phosphoprotein</keyword>
<keyword id="KW-1185">Reference proteome</keyword>
<reference evidence="7" key="1">
    <citation type="journal article" date="2005" name="Genome Biol.">
        <title>Full-length cDNAs from chicken bursal lymphocytes to facilitate gene function analysis.</title>
        <authorList>
            <person name="Caldwell R.B."/>
            <person name="Kierzek A.M."/>
            <person name="Arakawa H."/>
            <person name="Bezzubov Y."/>
            <person name="Zaim J."/>
            <person name="Fiedler P."/>
            <person name="Kutter S."/>
            <person name="Blagodatski A."/>
            <person name="Kostovska D."/>
            <person name="Koter M."/>
            <person name="Plachy J."/>
            <person name="Carninci P."/>
            <person name="Hayashizaki Y."/>
            <person name="Buerstedde J.-M."/>
        </authorList>
    </citation>
    <scope>NUCLEOTIDE SEQUENCE [LARGE SCALE MRNA]</scope>
    <source>
        <strain evidence="7">CB</strain>
        <tissue evidence="7">Bursa of Fabricius</tissue>
    </source>
</reference>
<reference evidence="6" key="2">
    <citation type="journal article" date="2006" name="Comp. Biochem. Physiol.">
        <title>Characterization of the AMP-activated protein kinase pathway in chickens.</title>
        <authorList>
            <person name="Proszkowiec-Weglarz M."/>
            <person name="Richards M.P."/>
            <person name="Ramachandran R."/>
            <person name="McMurtry J.P."/>
        </authorList>
    </citation>
    <scope>TISSUE SPECIFICITY</scope>
</reference>
<proteinExistence type="evidence at transcript level"/>
<protein>
    <recommendedName>
        <fullName>STE20-related kinase adapter protein alpha</fullName>
        <shortName>STRAD alpha</shortName>
    </recommendedName>
    <alternativeName>
        <fullName>STE20-related adapter protein</fullName>
    </alternativeName>
</protein>